<keyword id="KW-1185">Reference proteome</keyword>
<organism>
    <name type="scientific">Escherichia coli O1:K1 / APEC</name>
    <dbReference type="NCBI Taxonomy" id="405955"/>
    <lineage>
        <taxon>Bacteria</taxon>
        <taxon>Pseudomonadati</taxon>
        <taxon>Pseudomonadota</taxon>
        <taxon>Gammaproteobacteria</taxon>
        <taxon>Enterobacterales</taxon>
        <taxon>Enterobacteriaceae</taxon>
        <taxon>Escherichia</taxon>
    </lineage>
</organism>
<sequence length="125" mass="13867">MINSPRVCIQVQSVYIEAQSSPDNERYVFAYTVTIRNLGRAPVQLLGRYWLITNGNGRETEVQGEGVVGVQPLIAPGEEYQYTSGAIIETPLGTMQGHYEMIDENGVPFSIDIPVFRLAVPTLIH</sequence>
<protein>
    <recommendedName>
        <fullName evidence="1">Protein ApaG</fullName>
    </recommendedName>
</protein>
<accession>A1A799</accession>
<gene>
    <name evidence="1" type="primary">apaG</name>
    <name type="ordered locus">Ecok1_00450</name>
    <name type="ORF">APECO1_1932</name>
</gene>
<reference key="1">
    <citation type="journal article" date="2007" name="J. Bacteriol.">
        <title>The genome sequence of avian pathogenic Escherichia coli strain O1:K1:H7 shares strong similarities with human extraintestinal pathogenic E. coli genomes.</title>
        <authorList>
            <person name="Johnson T.J."/>
            <person name="Kariyawasam S."/>
            <person name="Wannemuehler Y."/>
            <person name="Mangiamele P."/>
            <person name="Johnson S.J."/>
            <person name="Doetkott C."/>
            <person name="Skyberg J.A."/>
            <person name="Lynne A.M."/>
            <person name="Johnson J.R."/>
            <person name="Nolan L.K."/>
        </authorList>
    </citation>
    <scope>NUCLEOTIDE SEQUENCE [LARGE SCALE GENOMIC DNA]</scope>
</reference>
<dbReference type="EMBL" id="CP000468">
    <property type="protein sequence ID" value="ABI99538.1"/>
    <property type="molecule type" value="Genomic_DNA"/>
</dbReference>
<dbReference type="RefSeq" id="WP_000610901.1">
    <property type="nucleotide sequence ID" value="NZ_CADILS010000013.1"/>
</dbReference>
<dbReference type="SMR" id="A1A799"/>
<dbReference type="GeneID" id="93777385"/>
<dbReference type="KEGG" id="ecv:APECO1_1932"/>
<dbReference type="HOGENOM" id="CLU_128074_0_0_6"/>
<dbReference type="Proteomes" id="UP000008216">
    <property type="component" value="Chromosome"/>
</dbReference>
<dbReference type="GO" id="GO:0070987">
    <property type="term" value="P:error-free translesion synthesis"/>
    <property type="evidence" value="ECO:0007669"/>
    <property type="project" value="TreeGrafter"/>
</dbReference>
<dbReference type="Gene3D" id="2.60.40.1470">
    <property type="entry name" value="ApaG domain"/>
    <property type="match status" value="1"/>
</dbReference>
<dbReference type="HAMAP" id="MF_00791">
    <property type="entry name" value="ApaG"/>
    <property type="match status" value="1"/>
</dbReference>
<dbReference type="InterPro" id="IPR007474">
    <property type="entry name" value="ApaG_domain"/>
</dbReference>
<dbReference type="InterPro" id="IPR036767">
    <property type="entry name" value="ApaG_sf"/>
</dbReference>
<dbReference type="InterPro" id="IPR023065">
    <property type="entry name" value="Uncharacterised_ApaG"/>
</dbReference>
<dbReference type="NCBIfam" id="NF003967">
    <property type="entry name" value="PRK05461.1"/>
    <property type="match status" value="1"/>
</dbReference>
<dbReference type="PANTHER" id="PTHR14289">
    <property type="entry name" value="F-BOX ONLY PROTEIN 3"/>
    <property type="match status" value="1"/>
</dbReference>
<dbReference type="PANTHER" id="PTHR14289:SF16">
    <property type="entry name" value="POLYMERASE DELTA-INTERACTING PROTEIN 2"/>
    <property type="match status" value="1"/>
</dbReference>
<dbReference type="Pfam" id="PF04379">
    <property type="entry name" value="DUF525"/>
    <property type="match status" value="1"/>
</dbReference>
<dbReference type="SUPFAM" id="SSF110069">
    <property type="entry name" value="ApaG-like"/>
    <property type="match status" value="1"/>
</dbReference>
<dbReference type="PROSITE" id="PS51087">
    <property type="entry name" value="APAG"/>
    <property type="match status" value="1"/>
</dbReference>
<evidence type="ECO:0000255" key="1">
    <source>
        <dbReference type="HAMAP-Rule" id="MF_00791"/>
    </source>
</evidence>
<name>APAG_ECOK1</name>
<proteinExistence type="inferred from homology"/>
<feature type="chain" id="PRO_1000083618" description="Protein ApaG">
    <location>
        <begin position="1"/>
        <end position="125"/>
    </location>
</feature>
<feature type="domain" description="ApaG" evidence="1">
    <location>
        <begin position="1"/>
        <end position="125"/>
    </location>
</feature>